<reference key="1">
    <citation type="journal article" date="2005" name="J. For. Res.">
        <title>Cloning and sequence analysis of arom gene from Sclerotinia sclerotiomm.</title>
        <authorList>
            <person name="Yang Q."/>
            <person name="Yu H.-Y."/>
            <person name="Li C.-Y."/>
        </authorList>
    </citation>
    <scope>NUCLEOTIDE SEQUENCE [GENOMIC DNA]</scope>
</reference>
<accession>Q5XNP0</accession>
<protein>
    <recommendedName>
        <fullName evidence="1">Pentafunctional AROM polypeptide</fullName>
    </recommendedName>
    <domain>
        <recommendedName>
            <fullName evidence="1">3-dehydroquinate synthase</fullName>
            <shortName evidence="1">DHQS</shortName>
            <ecNumber evidence="1">4.2.3.4</ecNumber>
        </recommendedName>
    </domain>
    <domain>
        <recommendedName>
            <fullName evidence="1">3-phosphoshikimate 1-carboxyvinyltransferase</fullName>
            <ecNumber evidence="1">2.5.1.19</ecNumber>
        </recommendedName>
        <alternativeName>
            <fullName evidence="1">5-enolpyruvylshikimate-3-phosphate synthase</fullName>
            <shortName evidence="1">EPSP synthase</shortName>
            <shortName evidence="1">EPSPS</shortName>
        </alternativeName>
    </domain>
    <domain>
        <recommendedName>
            <fullName evidence="1">Shikimate kinase</fullName>
            <shortName evidence="1">SK</shortName>
            <ecNumber evidence="1">2.7.1.71</ecNumber>
        </recommendedName>
    </domain>
    <domain>
        <recommendedName>
            <fullName evidence="1">3-dehydroquinate dehydratase</fullName>
            <shortName evidence="1">3-dehydroquinase</shortName>
            <ecNumber evidence="1">4.2.1.10</ecNumber>
        </recommendedName>
    </domain>
    <domain>
        <recommendedName>
            <fullName evidence="1">Shikimate dehydrogenase</fullName>
            <ecNumber evidence="1">1.1.1.25</ecNumber>
        </recommendedName>
    </domain>
</protein>
<sequence length="1590" mass="172659">MGSTTFENPTRIEILGKEDIIVDFDIWRNFVAEDLLSDLPSSTYVLITDTNLSPLYVPAFQQSFEALAAKSSSTPRLLTYEIPPGENSKSRETKAEIEDWMLSHQCTRDSVIIALGGGVIGDMIGYVAATFMRGVRFVQVPTTLLAMVDSSIGGKTAIDTPLGKNLVGAFWQPQRIYIDLRFLETLPVREFINGMAEVVKTAAIWDEAEFSALEDNANLIMTTIRAKNTDCSTRLGPIRDILKRIVLGSAKTKADVVSADEREGGLRNILNFGHSIGHAFEAILTPQVLHGEAVAIGMVKEAELARHLGVLKPGAVARLVKCIASYGLPTSLADKRIQKLTAGKLCPVDVLLEKMGVDKKNDGRKKKIVLLSAIGKTYEPKASVVEDRSIRVVLSDSVEVRPSVPETLNVEVTPPGSKSISNRALVLAALGTGPCRIKNLLHSDDVEFMLTSIGKLGGATYAWEDAGEVLCVQGKGGDLHASPTELYIGNAGTASRFLTTVVSLCKPSASTKSTILTGNARMKVRPIGPLVDSLRANGVDIEYLEKEHSLPLNVAASGGFTGGDINLAATVSSQYVSSLLMCAPYAKNPVTLRLVGGKPISQLYIDMTTAMMAAFGIHVVRSQTGEHTYHIPQGVYKNPEEYVVESDASSATYPLAVAATSGTTCTIPNIGCKSIQGDARFAIDVLKPTGCKVVQTDYSTTVTGPPIGSLQAIEEVDMEPMTDAFLTASVLGAVAKGTTKIRGIANQRVKECNRIKAMKDELAKFGVTCRELEDGIEVDGVPIKDLKHPAEGIHCYDDHRVAMSFSVLSVAASQPVLIEERECVGKTWPGWWDILSKSFQVELAGKEVKATHSKKIGIPTLPDKSIFIIGMRGAGKTTAGAWAAKILGRPYKDLDVELERISGMSIPDMVRSKGWDFFRAAELDLLKHCLTDQPEKHVFACGGGVVEMPEARELLINFHKSGGIVLLVHRDTEQVMDYLRIDKTRPAYVEDMMGVYSRRKPWFNECSNFQYHSKGSGASALSVAEQDFARFLHHISGKSLHFDEMRNKPQSFFVSLTMPDISGAAYILPSVAVGSDAVEVRVDLLEDPSSTNGIPGTDFLSVQIAHLRSVVHLPVIFTVRTVSQGGRFPDAAHEEALKLYKLAVKMGIEYIDLEIAFPDELLQEVTEAKGFSRIIASHHDPQGTLSWKNGGWFQHYNRALQYGDIIKLVGSAKSIEDNFALAKFKKTMAAAHDTPLIAINMGVTGKLSRVLNGFMTPVSHPSLPFKAAPGQLSAAEIRSTLSTLGEIEPKSFYLFGTPISQSRSPALHNTLFKQTGLPHRYSRLETDRVADVQDVIRAPDFGGASVTIPLKLDIIPLLDSVTDAVKVIGAVNTIIPTPDNPPRLVGENTDWLGMTHSLMSASHTPSPVDSPSPALVIGAGGTARAAIYALHSLGHSPIYMVARTPSKLDTLINSFPSSFNIIPLPSTTSATELTTPPAVAISTIPADRPIESNMRETLAVLLRHEKKDEGKQRTLLEMAYKPSQTPLMRMAEDAGWVAIPGLEVLSAQGWYQVSLFPFHLLVCYEVIFLNGFTKIYRLVSKMDKHPTFVC</sequence>
<evidence type="ECO:0000255" key="1">
    <source>
        <dbReference type="HAMAP-Rule" id="MF_03143"/>
    </source>
</evidence>
<comment type="function">
    <text evidence="1">The AROM polypeptide catalyzes 5 consecutive enzymatic reactions in prechorismate polyaromatic amino acid biosynthesis.</text>
</comment>
<comment type="catalytic activity">
    <reaction evidence="1">
        <text>7-phospho-2-dehydro-3-deoxy-D-arabino-heptonate = 3-dehydroquinate + phosphate</text>
        <dbReference type="Rhea" id="RHEA:21968"/>
        <dbReference type="ChEBI" id="CHEBI:32364"/>
        <dbReference type="ChEBI" id="CHEBI:43474"/>
        <dbReference type="ChEBI" id="CHEBI:58394"/>
        <dbReference type="EC" id="4.2.3.4"/>
    </reaction>
</comment>
<comment type="catalytic activity">
    <reaction evidence="1">
        <text>3-dehydroquinate = 3-dehydroshikimate + H2O</text>
        <dbReference type="Rhea" id="RHEA:21096"/>
        <dbReference type="ChEBI" id="CHEBI:15377"/>
        <dbReference type="ChEBI" id="CHEBI:16630"/>
        <dbReference type="ChEBI" id="CHEBI:32364"/>
        <dbReference type="EC" id="4.2.1.10"/>
    </reaction>
</comment>
<comment type="catalytic activity">
    <reaction evidence="1">
        <text>shikimate + NADP(+) = 3-dehydroshikimate + NADPH + H(+)</text>
        <dbReference type="Rhea" id="RHEA:17737"/>
        <dbReference type="ChEBI" id="CHEBI:15378"/>
        <dbReference type="ChEBI" id="CHEBI:16630"/>
        <dbReference type="ChEBI" id="CHEBI:36208"/>
        <dbReference type="ChEBI" id="CHEBI:57783"/>
        <dbReference type="ChEBI" id="CHEBI:58349"/>
        <dbReference type="EC" id="1.1.1.25"/>
    </reaction>
</comment>
<comment type="catalytic activity">
    <reaction evidence="1">
        <text>shikimate + ATP = 3-phosphoshikimate + ADP + H(+)</text>
        <dbReference type="Rhea" id="RHEA:13121"/>
        <dbReference type="ChEBI" id="CHEBI:15378"/>
        <dbReference type="ChEBI" id="CHEBI:30616"/>
        <dbReference type="ChEBI" id="CHEBI:36208"/>
        <dbReference type="ChEBI" id="CHEBI:145989"/>
        <dbReference type="ChEBI" id="CHEBI:456216"/>
        <dbReference type="EC" id="2.7.1.71"/>
    </reaction>
</comment>
<comment type="catalytic activity">
    <reaction evidence="1">
        <text>3-phosphoshikimate + phosphoenolpyruvate = 5-O-(1-carboxyvinyl)-3-phosphoshikimate + phosphate</text>
        <dbReference type="Rhea" id="RHEA:21256"/>
        <dbReference type="ChEBI" id="CHEBI:43474"/>
        <dbReference type="ChEBI" id="CHEBI:57701"/>
        <dbReference type="ChEBI" id="CHEBI:58702"/>
        <dbReference type="ChEBI" id="CHEBI:145989"/>
        <dbReference type="EC" id="2.5.1.19"/>
    </reaction>
</comment>
<comment type="cofactor">
    <cofactor>
        <name>Zn(2+)</name>
        <dbReference type="ChEBI" id="CHEBI:29105"/>
    </cofactor>
    <text>Binds 2 Zn(2+) ions per subunit.</text>
</comment>
<comment type="pathway">
    <text evidence="1">Metabolic intermediate biosynthesis; chorismate biosynthesis; chorismate from D-erythrose 4-phosphate and phosphoenolpyruvate: step 2/7.</text>
</comment>
<comment type="pathway">
    <text evidence="1">Metabolic intermediate biosynthesis; chorismate biosynthesis; chorismate from D-erythrose 4-phosphate and phosphoenolpyruvate: step 3/7.</text>
</comment>
<comment type="pathway">
    <text evidence="1">Metabolic intermediate biosynthesis; chorismate biosynthesis; chorismate from D-erythrose 4-phosphate and phosphoenolpyruvate: step 4/7.</text>
</comment>
<comment type="pathway">
    <text evidence="1">Metabolic intermediate biosynthesis; chorismate biosynthesis; chorismate from D-erythrose 4-phosphate and phosphoenolpyruvate: step 5/7.</text>
</comment>
<comment type="pathway">
    <text evidence="1">Metabolic intermediate biosynthesis; chorismate biosynthesis; chorismate from D-erythrose 4-phosphate and phosphoenolpyruvate: step 6/7.</text>
</comment>
<comment type="subunit">
    <text evidence="1">Homodimer.</text>
</comment>
<comment type="subcellular location">
    <subcellularLocation>
        <location evidence="1">Cytoplasm</location>
    </subcellularLocation>
</comment>
<comment type="similarity">
    <text evidence="1">In the N-terminal section; belongs to the sugar phosphate cyclases superfamily. Dehydroquinate synthase family.</text>
</comment>
<comment type="similarity">
    <text evidence="1">In the 2nd section; belongs to the EPSP synthase family.</text>
</comment>
<comment type="similarity">
    <text evidence="1">In the 3rd section; belongs to the shikimate kinase family.</text>
</comment>
<comment type="similarity">
    <text evidence="1">In the 4th section; belongs to the type-I 3-dehydroquinase family.</text>
</comment>
<comment type="similarity">
    <text evidence="1">In the C-terminal section; belongs to the shikimate dehydrogenase family.</text>
</comment>
<name>ARO1_SCLSC</name>
<proteinExistence type="inferred from homology"/>
<feature type="chain" id="PRO_0000406740" description="Pentafunctional AROM polypeptide">
    <location>
        <begin position="1"/>
        <end position="1590"/>
    </location>
</feature>
<feature type="region of interest" description="3-dehydroquinate synthase">
    <location>
        <begin position="1"/>
        <end position="387"/>
    </location>
</feature>
<feature type="region of interest" description="EPSP synthase">
    <location>
        <begin position="400"/>
        <end position="841"/>
    </location>
</feature>
<feature type="region of interest" description="Shikimate kinase">
    <location>
        <begin position="863"/>
        <end position="1055"/>
    </location>
</feature>
<feature type="region of interest" description="3-dehydroquinase">
    <location>
        <begin position="1056"/>
        <end position="1276"/>
    </location>
</feature>
<feature type="region of interest" description="Shikimate dehydrogenase">
    <location>
        <begin position="1289"/>
        <end position="1590"/>
    </location>
</feature>
<feature type="active site" description="Proton acceptor; for 3-dehydroquinate synthase activity" evidence="1">
    <location>
        <position position="263"/>
    </location>
</feature>
<feature type="active site" description="Proton acceptor; for 3-dehydroquinate synthase activity" evidence="1">
    <location>
        <position position="278"/>
    </location>
</feature>
<feature type="active site" description="For EPSP synthase activity" evidence="1">
    <location>
        <position position="823"/>
    </location>
</feature>
<feature type="active site" description="Proton acceptor; for 3-dehydroquinate dehydratase activity" evidence="1">
    <location>
        <position position="1179"/>
    </location>
</feature>
<feature type="active site" description="Schiff-base intermediate with substrate; for 3-dehydroquinate dehydratase activity" evidence="1">
    <location>
        <position position="1207"/>
    </location>
</feature>
<feature type="binding site" evidence="1">
    <location>
        <begin position="49"/>
        <end position="51"/>
    </location>
    <ligand>
        <name>NAD(+)</name>
        <dbReference type="ChEBI" id="CHEBI:57540"/>
    </ligand>
</feature>
<feature type="binding site" evidence="1">
    <location>
        <begin position="86"/>
        <end position="89"/>
    </location>
    <ligand>
        <name>NAD(+)</name>
        <dbReference type="ChEBI" id="CHEBI:57540"/>
    </ligand>
</feature>
<feature type="binding site" evidence="1">
    <location>
        <begin position="117"/>
        <end position="119"/>
    </location>
    <ligand>
        <name>NAD(+)</name>
        <dbReference type="ChEBI" id="CHEBI:57540"/>
    </ligand>
</feature>
<feature type="binding site" evidence="1">
    <location>
        <position position="122"/>
    </location>
    <ligand>
        <name>NAD(+)</name>
        <dbReference type="ChEBI" id="CHEBI:57540"/>
    </ligand>
</feature>
<feature type="binding site" evidence="1">
    <location>
        <position position="133"/>
    </location>
    <ligand>
        <name>7-phospho-2-dehydro-3-deoxy-D-arabino-heptonate</name>
        <dbReference type="ChEBI" id="CHEBI:58394"/>
    </ligand>
</feature>
<feature type="binding site" evidence="1">
    <location>
        <begin position="142"/>
        <end position="143"/>
    </location>
    <ligand>
        <name>NAD(+)</name>
        <dbReference type="ChEBI" id="CHEBI:57540"/>
    </ligand>
</feature>
<feature type="binding site" evidence="1">
    <location>
        <position position="149"/>
    </location>
    <ligand>
        <name>7-phospho-2-dehydro-3-deoxy-D-arabino-heptonate</name>
        <dbReference type="ChEBI" id="CHEBI:58394"/>
    </ligand>
</feature>
<feature type="binding site" evidence="1">
    <location>
        <position position="155"/>
    </location>
    <ligand>
        <name>7-phospho-2-dehydro-3-deoxy-D-arabino-heptonate</name>
        <dbReference type="ChEBI" id="CHEBI:58394"/>
    </ligand>
</feature>
<feature type="binding site" evidence="1">
    <location>
        <position position="164"/>
    </location>
    <ligand>
        <name>NAD(+)</name>
        <dbReference type="ChEBI" id="CHEBI:57540"/>
    </ligand>
</feature>
<feature type="binding site" evidence="1">
    <location>
        <position position="165"/>
    </location>
    <ligand>
        <name>7-phospho-2-dehydro-3-deoxy-D-arabino-heptonate</name>
        <dbReference type="ChEBI" id="CHEBI:58394"/>
    </ligand>
</feature>
<feature type="binding site" evidence="1">
    <location>
        <begin position="182"/>
        <end position="185"/>
    </location>
    <ligand>
        <name>NAD(+)</name>
        <dbReference type="ChEBI" id="CHEBI:57540"/>
    </ligand>
</feature>
<feature type="binding site" evidence="1">
    <location>
        <position position="193"/>
    </location>
    <ligand>
        <name>NAD(+)</name>
        <dbReference type="ChEBI" id="CHEBI:57540"/>
    </ligand>
</feature>
<feature type="binding site" evidence="1">
    <location>
        <begin position="197"/>
        <end position="200"/>
    </location>
    <ligand>
        <name>7-phospho-2-dehydro-3-deoxy-D-arabino-heptonate</name>
        <dbReference type="ChEBI" id="CHEBI:58394"/>
    </ligand>
</feature>
<feature type="binding site" evidence="1">
    <location>
        <position position="197"/>
    </location>
    <ligand>
        <name>Zn(2+)</name>
        <dbReference type="ChEBI" id="CHEBI:29105"/>
        <note>catalytic</note>
    </ligand>
</feature>
<feature type="binding site" evidence="1">
    <location>
        <position position="253"/>
    </location>
    <ligand>
        <name>7-phospho-2-dehydro-3-deoxy-D-arabino-heptonate</name>
        <dbReference type="ChEBI" id="CHEBI:58394"/>
    </ligand>
</feature>
<feature type="binding site" evidence="1">
    <location>
        <begin position="267"/>
        <end position="271"/>
    </location>
    <ligand>
        <name>7-phospho-2-dehydro-3-deoxy-D-arabino-heptonate</name>
        <dbReference type="ChEBI" id="CHEBI:58394"/>
    </ligand>
</feature>
<feature type="binding site" evidence="1">
    <location>
        <position position="274"/>
    </location>
    <ligand>
        <name>7-phospho-2-dehydro-3-deoxy-D-arabino-heptonate</name>
        <dbReference type="ChEBI" id="CHEBI:58394"/>
    </ligand>
</feature>
<feature type="binding site" evidence="1">
    <location>
        <position position="274"/>
    </location>
    <ligand>
        <name>Zn(2+)</name>
        <dbReference type="ChEBI" id="CHEBI:29105"/>
        <note>catalytic</note>
    </ligand>
</feature>
<feature type="binding site" evidence="1">
    <location>
        <position position="290"/>
    </location>
    <ligand>
        <name>7-phospho-2-dehydro-3-deoxy-D-arabino-heptonate</name>
        <dbReference type="ChEBI" id="CHEBI:58394"/>
    </ligand>
</feature>
<feature type="binding site" evidence="1">
    <location>
        <position position="290"/>
    </location>
    <ligand>
        <name>Zn(2+)</name>
        <dbReference type="ChEBI" id="CHEBI:29105"/>
        <note>catalytic</note>
    </ligand>
</feature>
<feature type="binding site" evidence="1">
    <location>
        <position position="359"/>
    </location>
    <ligand>
        <name>7-phospho-2-dehydro-3-deoxy-D-arabino-heptonate</name>
        <dbReference type="ChEBI" id="CHEBI:58394"/>
    </ligand>
</feature>
<feature type="binding site" evidence="1">
    <location>
        <begin position="870"/>
        <end position="877"/>
    </location>
    <ligand>
        <name>ATP</name>
        <dbReference type="ChEBI" id="CHEBI:30616"/>
    </ligand>
</feature>
<keyword id="KW-0028">Amino-acid biosynthesis</keyword>
<keyword id="KW-0057">Aromatic amino acid biosynthesis</keyword>
<keyword id="KW-0067">ATP-binding</keyword>
<keyword id="KW-0963">Cytoplasm</keyword>
<keyword id="KW-0418">Kinase</keyword>
<keyword id="KW-0456">Lyase</keyword>
<keyword id="KW-0479">Metal-binding</keyword>
<keyword id="KW-0511">Multifunctional enzyme</keyword>
<keyword id="KW-0521">NADP</keyword>
<keyword id="KW-0547">Nucleotide-binding</keyword>
<keyword id="KW-0560">Oxidoreductase</keyword>
<keyword id="KW-0808">Transferase</keyword>
<keyword id="KW-0862">Zinc</keyword>
<organism>
    <name type="scientific">Sclerotinia sclerotiorum</name>
    <name type="common">White mold</name>
    <name type="synonym">Whetzelinia sclerotiorum</name>
    <dbReference type="NCBI Taxonomy" id="5180"/>
    <lineage>
        <taxon>Eukaryota</taxon>
        <taxon>Fungi</taxon>
        <taxon>Dikarya</taxon>
        <taxon>Ascomycota</taxon>
        <taxon>Pezizomycotina</taxon>
        <taxon>Leotiomycetes</taxon>
        <taxon>Helotiales</taxon>
        <taxon>Sclerotiniaceae</taxon>
        <taxon>Sclerotinia</taxon>
    </lineage>
</organism>
<dbReference type="EC" id="4.2.3.4" evidence="1"/>
<dbReference type="EC" id="2.5.1.19" evidence="1"/>
<dbReference type="EC" id="2.7.1.71" evidence="1"/>
<dbReference type="EC" id="4.2.1.10" evidence="1"/>
<dbReference type="EC" id="1.1.1.25" evidence="1"/>
<dbReference type="EMBL" id="AY746008">
    <property type="protein sequence ID" value="AAU95677.1"/>
    <property type="molecule type" value="Genomic_DNA"/>
</dbReference>
<dbReference type="SMR" id="Q5XNP0"/>
<dbReference type="VEuPathDB" id="FungiDB:sscle_15g103530"/>
<dbReference type="UniPathway" id="UPA00053">
    <property type="reaction ID" value="UER00085"/>
</dbReference>
<dbReference type="UniPathway" id="UPA00053">
    <property type="reaction ID" value="UER00086"/>
</dbReference>
<dbReference type="UniPathway" id="UPA00053">
    <property type="reaction ID" value="UER00087"/>
</dbReference>
<dbReference type="UniPathway" id="UPA00053">
    <property type="reaction ID" value="UER00088"/>
</dbReference>
<dbReference type="UniPathway" id="UPA00053">
    <property type="reaction ID" value="UER00089"/>
</dbReference>
<dbReference type="GO" id="GO:0005737">
    <property type="term" value="C:cytoplasm"/>
    <property type="evidence" value="ECO:0007669"/>
    <property type="project" value="UniProtKB-SubCell"/>
</dbReference>
<dbReference type="GO" id="GO:0003855">
    <property type="term" value="F:3-dehydroquinate dehydratase activity"/>
    <property type="evidence" value="ECO:0007669"/>
    <property type="project" value="UniProtKB-UniRule"/>
</dbReference>
<dbReference type="GO" id="GO:0003856">
    <property type="term" value="F:3-dehydroquinate synthase activity"/>
    <property type="evidence" value="ECO:0007669"/>
    <property type="project" value="UniProtKB-UniRule"/>
</dbReference>
<dbReference type="GO" id="GO:0003866">
    <property type="term" value="F:3-phosphoshikimate 1-carboxyvinyltransferase activity"/>
    <property type="evidence" value="ECO:0007669"/>
    <property type="project" value="UniProtKB-UniRule"/>
</dbReference>
<dbReference type="GO" id="GO:0005524">
    <property type="term" value="F:ATP binding"/>
    <property type="evidence" value="ECO:0007669"/>
    <property type="project" value="UniProtKB-UniRule"/>
</dbReference>
<dbReference type="GO" id="GO:0046872">
    <property type="term" value="F:metal ion binding"/>
    <property type="evidence" value="ECO:0007669"/>
    <property type="project" value="UniProtKB-UniRule"/>
</dbReference>
<dbReference type="GO" id="GO:0004764">
    <property type="term" value="F:shikimate 3-dehydrogenase (NADP+) activity"/>
    <property type="evidence" value="ECO:0007669"/>
    <property type="project" value="UniProtKB-UniRule"/>
</dbReference>
<dbReference type="GO" id="GO:0004765">
    <property type="term" value="F:shikimate kinase activity"/>
    <property type="evidence" value="ECO:0007669"/>
    <property type="project" value="UniProtKB-UniRule"/>
</dbReference>
<dbReference type="GO" id="GO:0008652">
    <property type="term" value="P:amino acid biosynthetic process"/>
    <property type="evidence" value="ECO:0007669"/>
    <property type="project" value="UniProtKB-KW"/>
</dbReference>
<dbReference type="GO" id="GO:0009073">
    <property type="term" value="P:aromatic amino acid family biosynthetic process"/>
    <property type="evidence" value="ECO:0007669"/>
    <property type="project" value="UniProtKB-UniRule"/>
</dbReference>
<dbReference type="GO" id="GO:0009423">
    <property type="term" value="P:chorismate biosynthetic process"/>
    <property type="evidence" value="ECO:0007669"/>
    <property type="project" value="UniProtKB-UniRule"/>
</dbReference>
<dbReference type="CDD" id="cd00502">
    <property type="entry name" value="DHQase_I"/>
    <property type="match status" value="1"/>
</dbReference>
<dbReference type="CDD" id="cd08195">
    <property type="entry name" value="DHQS"/>
    <property type="match status" value="1"/>
</dbReference>
<dbReference type="CDD" id="cd01556">
    <property type="entry name" value="EPSP_synthase"/>
    <property type="match status" value="1"/>
</dbReference>
<dbReference type="CDD" id="cd01065">
    <property type="entry name" value="NAD_bind_Shikimate_DH"/>
    <property type="match status" value="1"/>
</dbReference>
<dbReference type="CDD" id="cd00464">
    <property type="entry name" value="SK"/>
    <property type="match status" value="1"/>
</dbReference>
<dbReference type="FunFam" id="1.20.1090.10:FF:000007">
    <property type="entry name" value="Pentafunctional AROM polypeptide"/>
    <property type="match status" value="1"/>
</dbReference>
<dbReference type="FunFam" id="3.20.20.70:FF:000135">
    <property type="entry name" value="Pentafunctional AROM polypeptide"/>
    <property type="match status" value="1"/>
</dbReference>
<dbReference type="FunFam" id="3.40.50.10860:FF:000015">
    <property type="entry name" value="Pentafunctional AROM polypeptide"/>
    <property type="match status" value="1"/>
</dbReference>
<dbReference type="FunFam" id="3.40.50.1970:FF:000007">
    <property type="entry name" value="Pentafunctional AROM polypeptide"/>
    <property type="match status" value="1"/>
</dbReference>
<dbReference type="FunFam" id="3.40.50.300:FF:001256">
    <property type="entry name" value="Pentafunctional AROM polypeptide"/>
    <property type="match status" value="1"/>
</dbReference>
<dbReference type="FunFam" id="3.65.10.10:FF:000007">
    <property type="entry name" value="Pentafunctional AROM polypeptide"/>
    <property type="match status" value="1"/>
</dbReference>
<dbReference type="FunFam" id="3.65.10.10:FF:000008">
    <property type="entry name" value="Pentafunctional AROM polypeptide"/>
    <property type="match status" value="1"/>
</dbReference>
<dbReference type="Gene3D" id="3.40.50.1970">
    <property type="match status" value="1"/>
</dbReference>
<dbReference type="Gene3D" id="3.20.20.70">
    <property type="entry name" value="Aldolase class I"/>
    <property type="match status" value="1"/>
</dbReference>
<dbReference type="Gene3D" id="1.20.1090.10">
    <property type="entry name" value="Dehydroquinate synthase-like - alpha domain"/>
    <property type="match status" value="1"/>
</dbReference>
<dbReference type="Gene3D" id="3.65.10.10">
    <property type="entry name" value="Enolpyruvate transferase domain"/>
    <property type="match status" value="2"/>
</dbReference>
<dbReference type="Gene3D" id="3.40.50.10860">
    <property type="entry name" value="Leucine Dehydrogenase, chain A, domain 1"/>
    <property type="match status" value="1"/>
</dbReference>
<dbReference type="Gene3D" id="3.40.50.720">
    <property type="entry name" value="NAD(P)-binding Rossmann-like Domain"/>
    <property type="match status" value="1"/>
</dbReference>
<dbReference type="Gene3D" id="3.40.50.300">
    <property type="entry name" value="P-loop containing nucleotide triphosphate hydrolases"/>
    <property type="match status" value="1"/>
</dbReference>
<dbReference type="HAMAP" id="MF_00210">
    <property type="entry name" value="EPSP_synth"/>
    <property type="match status" value="1"/>
</dbReference>
<dbReference type="HAMAP" id="MF_03143">
    <property type="entry name" value="Pentafunct_AroM"/>
    <property type="match status" value="1"/>
</dbReference>
<dbReference type="HAMAP" id="MF_00109">
    <property type="entry name" value="Shikimate_kinase"/>
    <property type="match status" value="1"/>
</dbReference>
<dbReference type="InterPro" id="IPR018508">
    <property type="entry name" value="3-dehydroquinate_DH_AS"/>
</dbReference>
<dbReference type="InterPro" id="IPR013785">
    <property type="entry name" value="Aldolase_TIM"/>
</dbReference>
<dbReference type="InterPro" id="IPR046346">
    <property type="entry name" value="Aminoacid_DH-like_N_sf"/>
</dbReference>
<dbReference type="InterPro" id="IPR016037">
    <property type="entry name" value="DHQ_synth_AroB"/>
</dbReference>
<dbReference type="InterPro" id="IPR030960">
    <property type="entry name" value="DHQS/DOIS_N"/>
</dbReference>
<dbReference type="InterPro" id="IPR056179">
    <property type="entry name" value="DHQS_C"/>
</dbReference>
<dbReference type="InterPro" id="IPR001381">
    <property type="entry name" value="DHquinase_I"/>
</dbReference>
<dbReference type="InterPro" id="IPR001986">
    <property type="entry name" value="Enolpyruvate_Tfrase_dom"/>
</dbReference>
<dbReference type="InterPro" id="IPR036968">
    <property type="entry name" value="Enolpyruvate_Tfrase_sf"/>
</dbReference>
<dbReference type="InterPro" id="IPR006264">
    <property type="entry name" value="EPSP_synthase"/>
</dbReference>
<dbReference type="InterPro" id="IPR023193">
    <property type="entry name" value="EPSP_synthase_CS"/>
</dbReference>
<dbReference type="InterPro" id="IPR036291">
    <property type="entry name" value="NAD(P)-bd_dom_sf"/>
</dbReference>
<dbReference type="InterPro" id="IPR027417">
    <property type="entry name" value="P-loop_NTPase"/>
</dbReference>
<dbReference type="InterPro" id="IPR008289">
    <property type="entry name" value="Pentafunct_AroM"/>
</dbReference>
<dbReference type="InterPro" id="IPR013792">
    <property type="entry name" value="RNA3'P_cycl/enolpyr_Trfase_a/b"/>
</dbReference>
<dbReference type="InterPro" id="IPR031322">
    <property type="entry name" value="Shikimate/glucono_kinase"/>
</dbReference>
<dbReference type="InterPro" id="IPR013708">
    <property type="entry name" value="Shikimate_DH-bd_N"/>
</dbReference>
<dbReference type="InterPro" id="IPR010110">
    <property type="entry name" value="Shikimate_DH_AroM-type"/>
</dbReference>
<dbReference type="InterPro" id="IPR000623">
    <property type="entry name" value="Shikimate_kinase/TSH1"/>
</dbReference>
<dbReference type="InterPro" id="IPR023000">
    <property type="entry name" value="Shikimate_kinase_CS"/>
</dbReference>
<dbReference type="NCBIfam" id="TIGR01356">
    <property type="entry name" value="aroA"/>
    <property type="match status" value="1"/>
</dbReference>
<dbReference type="NCBIfam" id="TIGR01357">
    <property type="entry name" value="aroB"/>
    <property type="match status" value="1"/>
</dbReference>
<dbReference type="NCBIfam" id="TIGR01093">
    <property type="entry name" value="aroD"/>
    <property type="match status" value="1"/>
</dbReference>
<dbReference type="NCBIfam" id="TIGR01809">
    <property type="entry name" value="Shik-DH-AROM"/>
    <property type="match status" value="1"/>
</dbReference>
<dbReference type="PANTHER" id="PTHR21090">
    <property type="entry name" value="AROM/DEHYDROQUINATE SYNTHASE"/>
    <property type="match status" value="1"/>
</dbReference>
<dbReference type="PANTHER" id="PTHR21090:SF5">
    <property type="entry name" value="PENTAFUNCTIONAL AROM POLYPEPTIDE"/>
    <property type="match status" value="1"/>
</dbReference>
<dbReference type="Pfam" id="PF01761">
    <property type="entry name" value="DHQ_synthase"/>
    <property type="match status" value="1"/>
</dbReference>
<dbReference type="Pfam" id="PF24621">
    <property type="entry name" value="DHQS_C"/>
    <property type="match status" value="1"/>
</dbReference>
<dbReference type="Pfam" id="PF01487">
    <property type="entry name" value="DHquinase_I"/>
    <property type="match status" value="1"/>
</dbReference>
<dbReference type="Pfam" id="PF00275">
    <property type="entry name" value="EPSP_synthase"/>
    <property type="match status" value="1"/>
</dbReference>
<dbReference type="Pfam" id="PF08501">
    <property type="entry name" value="Shikimate_dh_N"/>
    <property type="match status" value="1"/>
</dbReference>
<dbReference type="Pfam" id="PF01202">
    <property type="entry name" value="SKI"/>
    <property type="match status" value="1"/>
</dbReference>
<dbReference type="PIRSF" id="PIRSF000514">
    <property type="entry name" value="Pentafunct_AroM"/>
    <property type="match status" value="1"/>
</dbReference>
<dbReference type="PRINTS" id="PR01100">
    <property type="entry name" value="SHIKIMTKNASE"/>
</dbReference>
<dbReference type="SUPFAM" id="SSF51569">
    <property type="entry name" value="Aldolase"/>
    <property type="match status" value="1"/>
</dbReference>
<dbReference type="SUPFAM" id="SSF53223">
    <property type="entry name" value="Aminoacid dehydrogenase-like, N-terminal domain"/>
    <property type="match status" value="1"/>
</dbReference>
<dbReference type="SUPFAM" id="SSF56796">
    <property type="entry name" value="Dehydroquinate synthase-like"/>
    <property type="match status" value="1"/>
</dbReference>
<dbReference type="SUPFAM" id="SSF55205">
    <property type="entry name" value="EPT/RTPC-like"/>
    <property type="match status" value="1"/>
</dbReference>
<dbReference type="SUPFAM" id="SSF51735">
    <property type="entry name" value="NAD(P)-binding Rossmann-fold domains"/>
    <property type="match status" value="1"/>
</dbReference>
<dbReference type="SUPFAM" id="SSF52540">
    <property type="entry name" value="P-loop containing nucleoside triphosphate hydrolases"/>
    <property type="match status" value="1"/>
</dbReference>
<dbReference type="PROSITE" id="PS01028">
    <property type="entry name" value="DEHYDROQUINASE_I"/>
    <property type="match status" value="1"/>
</dbReference>
<dbReference type="PROSITE" id="PS00104">
    <property type="entry name" value="EPSP_SYNTHASE_1"/>
    <property type="match status" value="1"/>
</dbReference>
<dbReference type="PROSITE" id="PS00885">
    <property type="entry name" value="EPSP_SYNTHASE_2"/>
    <property type="match status" value="1"/>
</dbReference>
<dbReference type="PROSITE" id="PS01128">
    <property type="entry name" value="SHIKIMATE_KINASE"/>
    <property type="match status" value="1"/>
</dbReference>